<comment type="function">
    <text evidence="1">Catalyzes the reduction of hydroxylamine to form NH(3) and H(2)O.</text>
</comment>
<comment type="catalytic activity">
    <reaction evidence="1">
        <text>A + NH4(+) + H2O = hydroxylamine + AH2 + H(+)</text>
        <dbReference type="Rhea" id="RHEA:22052"/>
        <dbReference type="ChEBI" id="CHEBI:13193"/>
        <dbReference type="ChEBI" id="CHEBI:15377"/>
        <dbReference type="ChEBI" id="CHEBI:15378"/>
        <dbReference type="ChEBI" id="CHEBI:15429"/>
        <dbReference type="ChEBI" id="CHEBI:17499"/>
        <dbReference type="ChEBI" id="CHEBI:28938"/>
        <dbReference type="EC" id="1.7.99.1"/>
    </reaction>
</comment>
<comment type="cofactor">
    <cofactor evidence="2 3 4 5 7 9 10">
        <name>[4Fe-4S] cluster</name>
        <dbReference type="ChEBI" id="CHEBI:49883"/>
    </cofactor>
    <text evidence="2 3 4 5 7">Binds 1 spin-admixed [4Fe-4S] cluster.</text>
</comment>
<comment type="cofactor">
    <cofactor evidence="2 3 4 5 6 7 8 9">
        <name>hybrid [4Fe-2O-2S] cluster</name>
        <dbReference type="ChEBI" id="CHEBI:60519"/>
    </cofactor>
    <text evidence="2 3 4 5 6 7 8">Binds 1 hybrid [4Fe-2O-2S] cluster.</text>
</comment>
<comment type="subunit">
    <text evidence="3 4 5 7">Monomer.</text>
</comment>
<comment type="subcellular location">
    <subcellularLocation>
        <location evidence="1 5">Cytoplasm</location>
    </subcellularLocation>
</comment>
<comment type="similarity">
    <text evidence="1">Belongs to the HCP family.</text>
</comment>
<comment type="caution">
    <text evidence="11">Was originally thought to contain a [6Fe-6S] cluster as indicated.</text>
</comment>
<keyword id="KW-0002">3D-structure</keyword>
<keyword id="KW-0004">4Fe-4S</keyword>
<keyword id="KW-0963">Cytoplasm</keyword>
<keyword id="KW-0903">Direct protein sequencing</keyword>
<keyword id="KW-0408">Iron</keyword>
<keyword id="KW-0411">Iron-sulfur</keyword>
<keyword id="KW-0479">Metal-binding</keyword>
<keyword id="KW-0560">Oxidoreductase</keyword>
<keyword id="KW-1185">Reference proteome</keyword>
<sequence length="553" mass="59979">MFCFQCQETAKNTGCTVKGMCGKPEETANLQDLLIFVLRGIAIYGEKLKELGQPDRSNDDFVLQGLFATITNANWDDARFEAMISEGLARRDKLRNAFLAVYKAKNGKDFSEPLPEAATWTGDSTAFAEKAKSVGILATENEDVRSLRELLIIGLKGVAAYAEHAAVLGFRKTEIDEFMLEALASTTKDLSVDEMVALVMKAGGMAVTTMALLDEANTTTYGNPEITQVNIGVGKNPGILISGHDLKDMAELLKQTEGTGVDVYTHGEMLPANYYPAFKKYPHFVGNYGGSWWQQNPEFESFNGPILLTTNCLVPLKKENTYLDRLYTTGVVGYEGAKHIADRPAGGAKDFSALIAQAKKCPPPVEIETGSIVGGFAHHQVLALADKVVEAVKSGAIKRFVVMAGCDGRQKSRSYYTEVAENLPKDTVILTAGCAKYRYNKLNLGDIGGIPRVLDAGQCNDSYSLAVIALKLKEVFGLDDINDLPVSYDIAWYEQKAVAVLLALLFLGVKGIRLGPTLPAFLSPNVAKVLVENFNIKPIGTVQDDIAAMMAGK</sequence>
<name>HCP_NITV2</name>
<gene>
    <name evidence="1" type="primary">hcp</name>
    <name type="ordered locus">DVU_2013</name>
</gene>
<feature type="chain" id="PRO_0000151667" description="Hydroxylamine reductase">
    <location>
        <begin position="1"/>
        <end position="553"/>
    </location>
</feature>
<feature type="binding site" evidence="2 3 4 7 9 10">
    <location>
        <position position="3"/>
    </location>
    <ligand>
        <name>[4Fe-4S] cluster</name>
        <dbReference type="ChEBI" id="CHEBI:49883"/>
    </ligand>
</feature>
<feature type="binding site" evidence="2 3 4 7 9 10">
    <location>
        <position position="6"/>
    </location>
    <ligand>
        <name>[4Fe-4S] cluster</name>
        <dbReference type="ChEBI" id="CHEBI:49883"/>
    </ligand>
</feature>
<feature type="binding site" evidence="2 3 4 7 9 10">
    <location>
        <position position="15"/>
    </location>
    <ligand>
        <name>[4Fe-4S] cluster</name>
        <dbReference type="ChEBI" id="CHEBI:49883"/>
    </ligand>
</feature>
<feature type="binding site" evidence="2 3 4 7 9 10">
    <location>
        <position position="21"/>
    </location>
    <ligand>
        <name>[4Fe-4S] cluster</name>
        <dbReference type="ChEBI" id="CHEBI:49883"/>
    </ligand>
</feature>
<feature type="binding site" evidence="2 3 4 7 9">
    <location>
        <position position="244"/>
    </location>
    <ligand>
        <name>hybrid [4Fe-2O-2S] cluster</name>
        <dbReference type="ChEBI" id="CHEBI:60519"/>
    </ligand>
</feature>
<feature type="binding site" evidence="2 3 4 7 9">
    <location>
        <position position="268"/>
    </location>
    <ligand>
        <name>hybrid [4Fe-2O-2S] cluster</name>
        <dbReference type="ChEBI" id="CHEBI:60519"/>
    </ligand>
</feature>
<feature type="binding site" evidence="2 3 4 7 9">
    <location>
        <position position="312"/>
    </location>
    <ligand>
        <name>hybrid [4Fe-2O-2S] cluster</name>
        <dbReference type="ChEBI" id="CHEBI:60519"/>
    </ligand>
</feature>
<feature type="binding site" description="via persulfide group" evidence="2 3 4 7 9">
    <location>
        <position position="406"/>
    </location>
    <ligand>
        <name>hybrid [4Fe-2O-2S] cluster</name>
        <dbReference type="ChEBI" id="CHEBI:60519"/>
    </ligand>
</feature>
<feature type="binding site" evidence="2 3 4 7 9">
    <location>
        <position position="434"/>
    </location>
    <ligand>
        <name>hybrid [4Fe-2O-2S] cluster</name>
        <dbReference type="ChEBI" id="CHEBI:60519"/>
    </ligand>
</feature>
<feature type="binding site" evidence="2 3 4 7 9">
    <location>
        <position position="459"/>
    </location>
    <ligand>
        <name>hybrid [4Fe-2O-2S] cluster</name>
        <dbReference type="ChEBI" id="CHEBI:60519"/>
    </ligand>
</feature>
<feature type="binding site" evidence="2 3 4 7 9">
    <location>
        <position position="494"/>
    </location>
    <ligand>
        <name>hybrid [4Fe-2O-2S] cluster</name>
        <dbReference type="ChEBI" id="CHEBI:60519"/>
    </ligand>
</feature>
<feature type="binding site" evidence="2 3 4 7 9">
    <location>
        <position position="496"/>
    </location>
    <ligand>
        <name>hybrid [4Fe-2O-2S] cluster</name>
        <dbReference type="ChEBI" id="CHEBI:60519"/>
    </ligand>
</feature>
<feature type="modified residue" description="Cysteine persulfide" evidence="3">
    <location>
        <position position="406"/>
    </location>
</feature>
<feature type="helix" evidence="13">
    <location>
        <begin position="10"/>
        <end position="12"/>
    </location>
</feature>
<feature type="strand" evidence="13">
    <location>
        <begin position="15"/>
        <end position="18"/>
    </location>
</feature>
<feature type="helix" evidence="13">
    <location>
        <begin position="25"/>
        <end position="50"/>
    </location>
</feature>
<feature type="helix" evidence="13">
    <location>
        <begin position="59"/>
        <end position="68"/>
    </location>
</feature>
<feature type="turn" evidence="13">
    <location>
        <begin position="71"/>
        <end position="73"/>
    </location>
</feature>
<feature type="helix" evidence="13">
    <location>
        <begin position="77"/>
        <end position="106"/>
    </location>
</feature>
<feature type="helix" evidence="13">
    <location>
        <begin position="116"/>
        <end position="118"/>
    </location>
</feature>
<feature type="helix" evidence="13">
    <location>
        <begin position="124"/>
        <end position="126"/>
    </location>
</feature>
<feature type="helix" evidence="13">
    <location>
        <begin position="127"/>
        <end position="131"/>
    </location>
</feature>
<feature type="helix" evidence="13">
    <location>
        <begin position="136"/>
        <end position="138"/>
    </location>
</feature>
<feature type="helix" evidence="13">
    <location>
        <begin position="142"/>
        <end position="167"/>
    </location>
</feature>
<feature type="helix" evidence="13">
    <location>
        <begin position="173"/>
        <end position="185"/>
    </location>
</feature>
<feature type="helix" evidence="13">
    <location>
        <begin position="192"/>
        <end position="221"/>
    </location>
</feature>
<feature type="strand" evidence="13">
    <location>
        <begin position="227"/>
        <end position="230"/>
    </location>
</feature>
<feature type="strand" evidence="13">
    <location>
        <begin position="238"/>
        <end position="244"/>
    </location>
</feature>
<feature type="helix" evidence="13">
    <location>
        <begin position="246"/>
        <end position="256"/>
    </location>
</feature>
<feature type="turn" evidence="13">
    <location>
        <begin position="257"/>
        <end position="260"/>
    </location>
</feature>
<feature type="strand" evidence="13">
    <location>
        <begin position="262"/>
        <end position="265"/>
    </location>
</feature>
<feature type="helix" evidence="13">
    <location>
        <begin position="267"/>
        <end position="274"/>
    </location>
</feature>
<feature type="helix" evidence="13">
    <location>
        <begin position="276"/>
        <end position="279"/>
    </location>
</feature>
<feature type="strand" evidence="13">
    <location>
        <begin position="284"/>
        <end position="287"/>
    </location>
</feature>
<feature type="helix" evidence="13">
    <location>
        <begin position="292"/>
        <end position="294"/>
    </location>
</feature>
<feature type="helix" evidence="13">
    <location>
        <begin position="295"/>
        <end position="302"/>
    </location>
</feature>
<feature type="strand" evidence="13">
    <location>
        <begin position="306"/>
        <end position="311"/>
    </location>
</feature>
<feature type="helix" evidence="13">
    <location>
        <begin position="323"/>
        <end position="325"/>
    </location>
</feature>
<feature type="strand" evidence="13">
    <location>
        <begin position="326"/>
        <end position="329"/>
    </location>
</feature>
<feature type="strand" evidence="13">
    <location>
        <begin position="337"/>
        <end position="340"/>
    </location>
</feature>
<feature type="helix" evidence="13">
    <location>
        <begin position="352"/>
        <end position="358"/>
    </location>
</feature>
<feature type="strand" evidence="13">
    <location>
        <begin position="370"/>
        <end position="374"/>
    </location>
</feature>
<feature type="helix" evidence="13">
    <location>
        <begin position="378"/>
        <end position="383"/>
    </location>
</feature>
<feature type="helix" evidence="13">
    <location>
        <begin position="385"/>
        <end position="393"/>
    </location>
</feature>
<feature type="strand" evidence="12">
    <location>
        <begin position="395"/>
        <end position="397"/>
    </location>
</feature>
<feature type="strand" evidence="13">
    <location>
        <begin position="399"/>
        <end position="402"/>
    </location>
</feature>
<feature type="helix" evidence="13">
    <location>
        <begin position="411"/>
        <end position="413"/>
    </location>
</feature>
<feature type="helix" evidence="13">
    <location>
        <begin position="414"/>
        <end position="422"/>
    </location>
</feature>
<feature type="strand" evidence="13">
    <location>
        <begin position="427"/>
        <end position="431"/>
    </location>
</feature>
<feature type="helix" evidence="13">
    <location>
        <begin position="434"/>
        <end position="438"/>
    </location>
</feature>
<feature type="turn" evidence="13">
    <location>
        <begin position="439"/>
        <end position="441"/>
    </location>
</feature>
<feature type="strand" evidence="13">
    <location>
        <begin position="450"/>
        <end position="455"/>
    </location>
</feature>
<feature type="helix" evidence="13">
    <location>
        <begin position="459"/>
        <end position="461"/>
    </location>
</feature>
<feature type="helix" evidence="13">
    <location>
        <begin position="462"/>
        <end position="475"/>
    </location>
</feature>
<feature type="helix" evidence="13">
    <location>
        <begin position="481"/>
        <end position="483"/>
    </location>
</feature>
<feature type="strand" evidence="13">
    <location>
        <begin position="484"/>
        <end position="491"/>
    </location>
</feature>
<feature type="helix" evidence="13">
    <location>
        <begin position="495"/>
        <end position="506"/>
    </location>
</feature>
<feature type="strand" evidence="13">
    <location>
        <begin position="513"/>
        <end position="517"/>
    </location>
</feature>
<feature type="helix" evidence="13">
    <location>
        <begin position="524"/>
        <end position="534"/>
    </location>
</feature>
<feature type="helix" evidence="13">
    <location>
        <begin position="542"/>
        <end position="550"/>
    </location>
</feature>
<reference key="1">
    <citation type="journal article" date="1992" name="Eur. J. Biochem.">
        <title>The primary structure of a protein containing a putative [6Fe-6S] prismane cluster from Desulfovibrio vulgaris (Hildenborough).</title>
        <authorList>
            <person name="Stokkermans J.P.W.G."/>
            <person name="Pierik A.J."/>
            <person name="Wolbert R.B.G."/>
            <person name="Hagen W.R."/>
            <person name="van Dongen W.M.A.M."/>
            <person name="Veeger C."/>
        </authorList>
    </citation>
    <scope>NUCLEOTIDE SEQUENCE [GENOMIC DNA]</scope>
    <scope>PARTIAL PROTEIN SEQUENCE</scope>
</reference>
<reference key="2">
    <citation type="submission" date="1998-04" db="EMBL/GenBank/DDBJ databases">
        <authorList>
            <person name="van Dongen W.M.A.M."/>
        </authorList>
    </citation>
    <scope>SEQUENCE REVISION TO 202-204</scope>
</reference>
<reference key="3">
    <citation type="journal article" date="2004" name="Nat. Biotechnol.">
        <title>The genome sequence of the anaerobic, sulfate-reducing bacterium Desulfovibrio vulgaris Hildenborough.</title>
        <authorList>
            <person name="Heidelberg J.F."/>
            <person name="Seshadri R."/>
            <person name="Haveman S.A."/>
            <person name="Hemme C.L."/>
            <person name="Paulsen I.T."/>
            <person name="Kolonay J.F."/>
            <person name="Eisen J.A."/>
            <person name="Ward N.L."/>
            <person name="Methe B.A."/>
            <person name="Brinkac L.M."/>
            <person name="Daugherty S.C."/>
            <person name="DeBoy R.T."/>
            <person name="Dodson R.J."/>
            <person name="Durkin A.S."/>
            <person name="Madupu R."/>
            <person name="Nelson W.C."/>
            <person name="Sullivan S.A."/>
            <person name="Fouts D.E."/>
            <person name="Haft D.H."/>
            <person name="Selengut J."/>
            <person name="Peterson J.D."/>
            <person name="Davidsen T.M."/>
            <person name="Zafar N."/>
            <person name="Zhou L."/>
            <person name="Radune D."/>
            <person name="Dimitrov G."/>
            <person name="Hance M."/>
            <person name="Tran K."/>
            <person name="Khouri H.M."/>
            <person name="Gill J."/>
            <person name="Utterback T.R."/>
            <person name="Feldblyum T.V."/>
            <person name="Wall J.D."/>
            <person name="Voordouw G."/>
            <person name="Fraser C.M."/>
        </authorList>
    </citation>
    <scope>NUCLEOTIDE SEQUENCE [LARGE SCALE GENOMIC DNA]</scope>
    <source>
        <strain>ATCC 29579 / DSM 644 / CCUG 34227 / NCIMB 8303 / VKM B-1760 / Hildenborough</strain>
    </source>
</reference>
<reference key="4">
    <citation type="journal article" date="1992" name="Eur. J. Biochem.">
        <title>Purification and biochemical characterization of a putative [6Fe-6S] prismane-cluster-containing protein from Desulfovibrio vulgaris (Hildenborough).</title>
        <authorList>
            <person name="Pierik A.J."/>
            <person name="Wolbert R.B.G."/>
            <person name="Mutsaers P.H.A."/>
            <person name="Hagen W.R."/>
            <person name="Veeger C."/>
        </authorList>
    </citation>
    <scope>PROTEIN SEQUENCE OF 1-14</scope>
    <scope>SUBCELLULAR LOCATION</scope>
    <scope>COFACTOR</scope>
    <scope>SUBUNIT</scope>
</reference>
<reference key="5">
    <citation type="journal article" date="1992" name="Eur. J. Biochem.">
        <title>Multi-frequency EPR and high-resolution Mossbauer spectroscopy of a putative [6Fe-6S] prismane-cluster-containing protein from Desulfovibrio vulgaris (Hildenborough). Characterization of a supercluster and superspin model protein.</title>
        <authorList>
            <person name="Pierik A.J."/>
            <person name="Hagen W.R."/>
            <person name="Dunham W.R."/>
            <person name="Sands R.H."/>
        </authorList>
    </citation>
    <scope>COFACTOR</scope>
</reference>
<reference key="6">
    <citation type="journal article" date="1998" name="Eur. J. Biochem.">
        <title>The prismane protein resolved -- Mossbauer investigation of a 4Fe cluster with an unusual mixture of bridging ligands and metal coordinations.</title>
        <authorList>
            <person name="Kroeckel M."/>
            <person name="Trautwein A.X."/>
            <person name="Arendsen A.F."/>
            <person name="Hagen W.R."/>
        </authorList>
    </citation>
    <scope>COFACTOR</scope>
</reference>
<reference key="7">
    <citation type="journal article" date="1998" name="J. Biol. Inorg. Chem.">
        <title>The 'prismane' protein resolved: X-ray structure at 1.7-A and multiple spectroscopy of two novel 4Fe clusters.</title>
        <authorList>
            <person name="Arendsen A.F."/>
            <person name="Hadden J."/>
            <person name="Card G."/>
            <person name="McAlpine A.S."/>
            <person name="Bailey S."/>
            <person name="Zaitsev V."/>
            <person name="Duke E.H.M."/>
            <person name="Lindley P.F."/>
            <person name="Kroeckel M."/>
            <person name="Trautwein A.X."/>
            <person name="Feiters M.C."/>
            <person name="Charnock J.M."/>
            <person name="Garner C.D."/>
            <person name="Marritt S.J."/>
            <person name="Thomson A.J."/>
            <person name="Kooter I.M."/>
            <person name="Johnson M.K."/>
            <person name="van den Berg W.A.M."/>
            <person name="van Dongen W.M.A.M."/>
            <person name="Hagen W.R."/>
        </authorList>
    </citation>
    <scope>X-RAY CRYSTALLOGRAPHY (1.72 ANGSTROMS) IN COMPLEX WITH IRON-SULFUR CLUSTER</scope>
    <scope>COFACTOR</scope>
    <source>
        <strain>ATCC 29579 / DSM 644 / CCUG 34227 / NCIMB 8303 / VKM B-1760 / Hildenborough</strain>
    </source>
</reference>
<reference key="8">
    <citation type="journal article" date="2000" name="Biochemistry">
        <title>Hybrid-cluster protein (HCP) from Desulfovibrio vulgaris (Hildenborough) at 1.6 A resolution.</title>
        <authorList>
            <person name="Cooper S.J."/>
            <person name="Garner C.D."/>
            <person name="Hagen W.R."/>
            <person name="Lindley P.F."/>
            <person name="Bailey S."/>
        </authorList>
    </citation>
    <scope>X-RAY CRYSTALLOGRAPHY (1.60 ANGSTROMS) IN COMPLEX WITH IRON-SULFUR CLUSTER AND IRON-SULFUR-OXYGEN CLUSTER</scope>
    <scope>COFACTOR</scope>
</reference>
<reference key="9">
    <citation type="journal article" date="2002" name="J. Biol. Inorg. Chem.">
        <title>Hybrid cluster proteins (HCPs) from Desulfovibrio desulfuricans ATCC 27774 and Desulfovibrio vulgaris (Hildenborough): X-ray structures at 1.25 A resolution using synchrotron radiation.</title>
        <authorList>
            <person name="Macedo S."/>
            <person name="Mitchell E.P."/>
            <person name="Romao C.V."/>
            <person name="Cooper S.J."/>
            <person name="Coelho R."/>
            <person name="Liu M.Y."/>
            <person name="Xavier A.V."/>
            <person name="LeGall J."/>
            <person name="Bailey S."/>
            <person name="Garner C.D."/>
            <person name="Hagen W.R."/>
            <person name="Teixeira M."/>
            <person name="Carrondo M.A."/>
            <person name="Lindley P."/>
        </authorList>
    </citation>
    <scope>X-RAY CRYSTALLOGRAPHY (1.25 ANGSTROMS) IN COMPLEX WITH IRON-SULFUR CLUSTER AND IRON-SULFUR-OXYGEN CLUSTER</scope>
    <scope>COFACTOR</scope>
    <scope>SULFHYDRATION AT CYS-406</scope>
    <scope>SUBUNIT</scope>
    <source>
        <strain>ATCC 29579 / DSM 644 / CCUG 34227 / NCIMB 8303 / VKM B-1760 / Hildenborough</strain>
    </source>
</reference>
<reference key="10">
    <citation type="journal article" date="2003" name="J. Biol. Inorg. Chem.">
        <title>Reduced hybrid cluster proteins (HCP) from Desulfovibrio desulfuricans ATCC 27774 and Desulfovibrio vulgaris (Hildenborough): X-ray structures at high resolution using synchrotron radiation.</title>
        <authorList>
            <person name="Aragao D."/>
            <person name="Macedo S."/>
            <person name="Mitchell E.P."/>
            <person name="Romao C.V."/>
            <person name="Liu M.Y."/>
            <person name="Frazao C."/>
            <person name="Saraiva L.M."/>
            <person name="Xavier A.V."/>
            <person name="LeGall J."/>
            <person name="van Dongen W.M.A.M."/>
            <person name="Hagen W.R."/>
            <person name="Teixeira M."/>
            <person name="Carrondo M.A."/>
            <person name="Lindley P."/>
        </authorList>
    </citation>
    <scope>X-RAY CRYSTALLOGRAPHY (1.55 ANGSTROMS) IN COMPLEX WITH IRON-SULFUR CLUSTER AND IRON-SULFUR-OXYGEN CLUSTER</scope>
    <scope>COFACTOR</scope>
    <scope>SUBUNIT</scope>
    <source>
        <strain>ATCC 29579 / DSM 644 / CCUG 34227 / NCIMB 8303 / VKM B-1760 / Hildenborough</strain>
    </source>
</reference>
<reference key="11">
    <citation type="journal article" date="2008" name="Acta Crystallogr. D">
        <title>Structural and functional relationships in the hybrid cluster protein family: structure of the anaerobically purified hybrid cluster protein from Desulfovibrio vulgaris at 1.35 A resolution.</title>
        <authorList>
            <person name="Aragao D."/>
            <person name="Mitchell E.P."/>
            <person name="Frazao C.F."/>
            <person name="Carrondo M.A."/>
            <person name="Lindley P.F."/>
        </authorList>
    </citation>
    <scope>X-RAY CRYSTALLOGRAPHY (1.35 ANGSTROMS) IN COMPLEX WITH IRON-SULFUR CLUSTER AND IRON-SULFUR-OXYGEN CLUSTER</scope>
    <scope>COFACTOR</scope>
    <scope>SUBUNIT</scope>
    <source>
        <strain>ATCC 29579 / DSM 644 / CCUG 34227 / NCIMB 8303 / VKM B-1760 / Hildenborough</strain>
    </source>
</reference>
<reference key="12">
    <citation type="submission" date="2000-10" db="PDB data bank">
        <title>Ferricyanide soaked hybrid cluster protein at 1.2A and xenon mapping of the hydrophobic cavity at 1.8A.</title>
        <authorList>
            <person name="Cooper S.J."/>
            <person name="Garner C.D."/>
            <person name="Hagen W.R."/>
            <person name="Lindley P.F."/>
            <person name="Bailey S."/>
        </authorList>
    </citation>
    <scope>X-RAY CRYSTALLOGRAPHY (1.79 ANGSTROMS) IN COMPLEX WITH IRON-SULFUR CLUSTER AND IRON-SULFUR-OXYGEN CLUSTER</scope>
    <scope>COFACTOR</scope>
</reference>
<evidence type="ECO:0000255" key="1">
    <source>
        <dbReference type="HAMAP-Rule" id="MF_00069"/>
    </source>
</evidence>
<evidence type="ECO:0000269" key="2">
    <source>
    </source>
</evidence>
<evidence type="ECO:0000269" key="3">
    <source>
    </source>
</evidence>
<evidence type="ECO:0000269" key="4">
    <source>
    </source>
</evidence>
<evidence type="ECO:0000269" key="5">
    <source>
    </source>
</evidence>
<evidence type="ECO:0000269" key="6">
    <source>
    </source>
</evidence>
<evidence type="ECO:0000269" key="7">
    <source>
    </source>
</evidence>
<evidence type="ECO:0000269" key="8">
    <source>
    </source>
</evidence>
<evidence type="ECO:0000269" key="9">
    <source ref="12"/>
</evidence>
<evidence type="ECO:0000269" key="10">
    <source ref="7"/>
</evidence>
<evidence type="ECO:0000305" key="11">
    <source>
    </source>
</evidence>
<evidence type="ECO:0007829" key="12">
    <source>
        <dbReference type="PDB" id="1E9V"/>
    </source>
</evidence>
<evidence type="ECO:0007829" key="13">
    <source>
        <dbReference type="PDB" id="1GNT"/>
    </source>
</evidence>
<accession>P31101</accession>
<dbReference type="EC" id="1.7.99.1" evidence="1"/>
<dbReference type="EMBL" id="Z11707">
    <property type="protein sequence ID" value="CAA77767.1"/>
    <property type="molecule type" value="Genomic_DNA"/>
</dbReference>
<dbReference type="EMBL" id="AE017285">
    <property type="protein sequence ID" value="AAS96488.1"/>
    <property type="molecule type" value="Genomic_DNA"/>
</dbReference>
<dbReference type="PIR" id="S29861">
    <property type="entry name" value="S29861"/>
</dbReference>
<dbReference type="RefSeq" id="WP_010939296.1">
    <property type="nucleotide sequence ID" value="NC_002937.3"/>
</dbReference>
<dbReference type="RefSeq" id="YP_011229.1">
    <property type="nucleotide sequence ID" value="NC_002937.3"/>
</dbReference>
<dbReference type="PDB" id="1E1D">
    <property type="method" value="X-ray"/>
    <property type="resolution" value="1.72 A"/>
    <property type="chains" value="A=1-553"/>
</dbReference>
<dbReference type="PDB" id="1E2U">
    <property type="method" value="X-ray"/>
    <property type="resolution" value="1.60 A"/>
    <property type="chains" value="A=1-553"/>
</dbReference>
<dbReference type="PDB" id="1E9V">
    <property type="method" value="X-ray"/>
    <property type="resolution" value="1.72 A"/>
    <property type="chains" value="A=1-553"/>
</dbReference>
<dbReference type="PDB" id="1GNT">
    <property type="method" value="X-ray"/>
    <property type="resolution" value="1.25 A"/>
    <property type="chains" value="A=1-553"/>
</dbReference>
<dbReference type="PDB" id="1OA1">
    <property type="method" value="X-ray"/>
    <property type="resolution" value="1.55 A"/>
    <property type="chains" value="A=1-553"/>
</dbReference>
<dbReference type="PDB" id="1W9M">
    <property type="method" value="X-ray"/>
    <property type="resolution" value="1.35 A"/>
    <property type="chains" value="A=1-553"/>
</dbReference>
<dbReference type="PDBsum" id="1E1D"/>
<dbReference type="PDBsum" id="1E2U"/>
<dbReference type="PDBsum" id="1E9V"/>
<dbReference type="PDBsum" id="1GNT"/>
<dbReference type="PDBsum" id="1OA1"/>
<dbReference type="PDBsum" id="1W9M"/>
<dbReference type="SMR" id="P31101"/>
<dbReference type="STRING" id="882.DVU_2013"/>
<dbReference type="DrugBank" id="DB02761">
    <property type="generic name" value="S-Mercaptocysteine"/>
</dbReference>
<dbReference type="PaxDb" id="882-DVU_2013"/>
<dbReference type="EnsemblBacteria" id="AAS96488">
    <property type="protein sequence ID" value="AAS96488"/>
    <property type="gene ID" value="DVU_2013"/>
</dbReference>
<dbReference type="KEGG" id="dvu:DVU_2013"/>
<dbReference type="PATRIC" id="fig|882.5.peg.1845"/>
<dbReference type="eggNOG" id="COG1151">
    <property type="taxonomic scope" value="Bacteria"/>
</dbReference>
<dbReference type="HOGENOM" id="CLU_038344_2_0_7"/>
<dbReference type="OrthoDB" id="9761526at2"/>
<dbReference type="PhylomeDB" id="P31101"/>
<dbReference type="EvolutionaryTrace" id="P31101"/>
<dbReference type="Proteomes" id="UP000002194">
    <property type="component" value="Chromosome"/>
</dbReference>
<dbReference type="GO" id="GO:0005737">
    <property type="term" value="C:cytoplasm"/>
    <property type="evidence" value="ECO:0007669"/>
    <property type="project" value="UniProtKB-SubCell"/>
</dbReference>
<dbReference type="GO" id="GO:0051539">
    <property type="term" value="F:4 iron, 4 sulfur cluster binding"/>
    <property type="evidence" value="ECO:0007669"/>
    <property type="project" value="UniProtKB-KW"/>
</dbReference>
<dbReference type="GO" id="GO:0050418">
    <property type="term" value="F:hydroxylamine reductase activity"/>
    <property type="evidence" value="ECO:0007669"/>
    <property type="project" value="UniProtKB-UniRule"/>
</dbReference>
<dbReference type="GO" id="GO:0046872">
    <property type="term" value="F:metal ion binding"/>
    <property type="evidence" value="ECO:0007669"/>
    <property type="project" value="UniProtKB-KW"/>
</dbReference>
<dbReference type="GO" id="GO:0004601">
    <property type="term" value="F:peroxidase activity"/>
    <property type="evidence" value="ECO:0007669"/>
    <property type="project" value="TreeGrafter"/>
</dbReference>
<dbReference type="GO" id="GO:0042542">
    <property type="term" value="P:response to hydrogen peroxide"/>
    <property type="evidence" value="ECO:0007669"/>
    <property type="project" value="TreeGrafter"/>
</dbReference>
<dbReference type="CDD" id="cd01914">
    <property type="entry name" value="HCP"/>
    <property type="match status" value="1"/>
</dbReference>
<dbReference type="FunFam" id="3.40.50.2030:FF:000001">
    <property type="entry name" value="Hydroxylamine reductase"/>
    <property type="match status" value="1"/>
</dbReference>
<dbReference type="FunFam" id="3.40.50.2030:FF:000002">
    <property type="entry name" value="Hydroxylamine reductase"/>
    <property type="match status" value="1"/>
</dbReference>
<dbReference type="Gene3D" id="1.20.1270.20">
    <property type="match status" value="2"/>
</dbReference>
<dbReference type="Gene3D" id="3.40.50.2030">
    <property type="match status" value="2"/>
</dbReference>
<dbReference type="HAMAP" id="MF_00069">
    <property type="entry name" value="Hydroxylam_reduct"/>
    <property type="match status" value="1"/>
</dbReference>
<dbReference type="InterPro" id="IPR004137">
    <property type="entry name" value="HCP/CODH"/>
</dbReference>
<dbReference type="InterPro" id="IPR010048">
    <property type="entry name" value="Hydroxylam_reduct"/>
</dbReference>
<dbReference type="InterPro" id="IPR016099">
    <property type="entry name" value="Prismane-like_a/b-sand"/>
</dbReference>
<dbReference type="InterPro" id="IPR011254">
    <property type="entry name" value="Prismane-like_sf"/>
</dbReference>
<dbReference type="InterPro" id="IPR016100">
    <property type="entry name" value="Prismane_a-bundle"/>
</dbReference>
<dbReference type="NCBIfam" id="TIGR01703">
    <property type="entry name" value="hybrid_clust"/>
    <property type="match status" value="1"/>
</dbReference>
<dbReference type="NCBIfam" id="NF003658">
    <property type="entry name" value="PRK05290.1"/>
    <property type="match status" value="1"/>
</dbReference>
<dbReference type="PANTHER" id="PTHR30109">
    <property type="entry name" value="HYDROXYLAMINE REDUCTASE"/>
    <property type="match status" value="1"/>
</dbReference>
<dbReference type="PANTHER" id="PTHR30109:SF0">
    <property type="entry name" value="HYDROXYLAMINE REDUCTASE"/>
    <property type="match status" value="1"/>
</dbReference>
<dbReference type="Pfam" id="PF03063">
    <property type="entry name" value="Prismane"/>
    <property type="match status" value="1"/>
</dbReference>
<dbReference type="PIRSF" id="PIRSF000076">
    <property type="entry name" value="HCP"/>
    <property type="match status" value="1"/>
</dbReference>
<dbReference type="SUPFAM" id="SSF56821">
    <property type="entry name" value="Prismane protein-like"/>
    <property type="match status" value="1"/>
</dbReference>
<protein>
    <recommendedName>
        <fullName evidence="1">Hydroxylamine reductase</fullName>
        <ecNumber evidence="1">1.7.99.1</ecNumber>
    </recommendedName>
    <alternativeName>
        <fullName evidence="1">Hybrid-cluster protein</fullName>
        <shortName evidence="1">HCP</shortName>
    </alternativeName>
    <alternativeName>
        <fullName evidence="1">Prismane protein</fullName>
    </alternativeName>
</protein>
<proteinExistence type="evidence at protein level"/>
<organism>
    <name type="scientific">Nitratidesulfovibrio vulgaris (strain ATCC 29579 / DSM 644 / CCUG 34227 / NCIMB 8303 / VKM B-1760 / Hildenborough)</name>
    <name type="common">Desulfovibrio vulgaris</name>
    <dbReference type="NCBI Taxonomy" id="882"/>
    <lineage>
        <taxon>Bacteria</taxon>
        <taxon>Pseudomonadati</taxon>
        <taxon>Thermodesulfobacteriota</taxon>
        <taxon>Desulfovibrionia</taxon>
        <taxon>Desulfovibrionales</taxon>
        <taxon>Desulfovibrionaceae</taxon>
        <taxon>Nitratidesulfovibrio</taxon>
    </lineage>
</organism>